<evidence type="ECO:0000255" key="1">
    <source>
        <dbReference type="HAMAP-Rule" id="MF_00054"/>
    </source>
</evidence>
<sequence>MPRYKTVEQVLSLMKDRTRVRNIGIIAHVDHGKTTTSDTLLAASGIISPKVAGEALALDYLSVEQQRGITVKAANISLYHEAEGKGYVINLIDTPGHVDFSGRVTRSLRVLDGSIVVVDAVEGIMTQTETVLRQSLEERVRPILFINKVDRLVKELKLSPQEMLNRLLDIIRQVNNLIDMYGEPEFKEKWMINPQAGNVIFGSAKDKWGFSLPMAQKKGINMKNVIDAYTASDKSKLEELAAQAPINEALLDAAIKFVPNPIEAQKYRIPKIWKGDLDNELAKAMLNADPNGPIVFMITDMKVDPHAGLVATGRVFSGTLRSGEELWLVNAKTSQRILQVSLYMGPTRELAEEIPAGNIAAVLGLDRARSGETAISVGFSNVQGSFERLHYISEPVVTIAVEPKNPKDLTKMIDALRKLSIEDPNLVVKINEETGEYLLSGMGFLHLEVSLQLLRENYGIDVVTTPPIVVYRESIRAKSQVFEGKSPNKHNKFYLSVEPLNDKTIELISNGTIREDMDSKEMAKILRDEASWDYDEAKRIIAIDENVNVFVDLTSGVQHLREVMDTVLQGFRLAMKEGPLAHEPIRGVKVILHDAVIHEDPAHRGPAQIYPAVRNSIFAGFLTSRPTLLEPIQKLDIRVPADLIGNVTAVITRKRGKILDVSQIANMSRITAEIPVSESYDMASELRGSTGGRAFWGTEFSRWAPVPDSILLDVVTKIRERKGLPKELPKVEDFLS</sequence>
<dbReference type="EMBL" id="CP001403">
    <property type="protein sequence ID" value="ACP45675.1"/>
    <property type="molecule type" value="Genomic_DNA"/>
</dbReference>
<dbReference type="RefSeq" id="WP_012711411.1">
    <property type="nucleotide sequence ID" value="NC_012622.1"/>
</dbReference>
<dbReference type="SMR" id="C3NED6"/>
<dbReference type="KEGG" id="siy:YG5714_1408"/>
<dbReference type="HOGENOM" id="CLU_002794_11_1_2"/>
<dbReference type="Proteomes" id="UP000002308">
    <property type="component" value="Chromosome"/>
</dbReference>
<dbReference type="GO" id="GO:0005829">
    <property type="term" value="C:cytosol"/>
    <property type="evidence" value="ECO:0007669"/>
    <property type="project" value="TreeGrafter"/>
</dbReference>
<dbReference type="GO" id="GO:1990904">
    <property type="term" value="C:ribonucleoprotein complex"/>
    <property type="evidence" value="ECO:0007669"/>
    <property type="project" value="TreeGrafter"/>
</dbReference>
<dbReference type="GO" id="GO:0005525">
    <property type="term" value="F:GTP binding"/>
    <property type="evidence" value="ECO:0007669"/>
    <property type="project" value="UniProtKB-UniRule"/>
</dbReference>
<dbReference type="GO" id="GO:0003924">
    <property type="term" value="F:GTPase activity"/>
    <property type="evidence" value="ECO:0007669"/>
    <property type="project" value="InterPro"/>
</dbReference>
<dbReference type="GO" id="GO:0003746">
    <property type="term" value="F:translation elongation factor activity"/>
    <property type="evidence" value="ECO:0007669"/>
    <property type="project" value="UniProtKB-UniRule"/>
</dbReference>
<dbReference type="CDD" id="cd01681">
    <property type="entry name" value="aeEF2_snRNP_like_IV"/>
    <property type="match status" value="1"/>
</dbReference>
<dbReference type="CDD" id="cd01885">
    <property type="entry name" value="EF2"/>
    <property type="match status" value="1"/>
</dbReference>
<dbReference type="CDD" id="cd16268">
    <property type="entry name" value="EF2_II"/>
    <property type="match status" value="1"/>
</dbReference>
<dbReference type="CDD" id="cd16261">
    <property type="entry name" value="EF2_snRNP_III"/>
    <property type="match status" value="1"/>
</dbReference>
<dbReference type="CDD" id="cd01514">
    <property type="entry name" value="Elongation_Factor_C"/>
    <property type="match status" value="1"/>
</dbReference>
<dbReference type="FunFam" id="3.30.230.10:FF:000009">
    <property type="entry name" value="116 kDa U5 small nuclear ribonucleoprotein component"/>
    <property type="match status" value="1"/>
</dbReference>
<dbReference type="FunFam" id="3.30.70.240:FF:000010">
    <property type="entry name" value="Elongation factor 2"/>
    <property type="match status" value="1"/>
</dbReference>
<dbReference type="FunFam" id="3.40.50.300:FF:000684">
    <property type="entry name" value="Elongation factor 2"/>
    <property type="match status" value="1"/>
</dbReference>
<dbReference type="FunFam" id="3.30.70.870:FF:000002">
    <property type="entry name" value="Translation elongation factor 2"/>
    <property type="match status" value="1"/>
</dbReference>
<dbReference type="Gene3D" id="3.30.230.10">
    <property type="match status" value="1"/>
</dbReference>
<dbReference type="Gene3D" id="3.30.70.240">
    <property type="match status" value="1"/>
</dbReference>
<dbReference type="Gene3D" id="3.30.70.870">
    <property type="entry name" value="Elongation Factor G (Translational Gtpase), domain 3"/>
    <property type="match status" value="1"/>
</dbReference>
<dbReference type="Gene3D" id="3.40.50.300">
    <property type="entry name" value="P-loop containing nucleotide triphosphate hydrolases"/>
    <property type="match status" value="1"/>
</dbReference>
<dbReference type="Gene3D" id="2.40.30.10">
    <property type="entry name" value="Translation factors"/>
    <property type="match status" value="1"/>
</dbReference>
<dbReference type="HAMAP" id="MF_00054_A">
    <property type="entry name" value="EF_G_EF_2_A"/>
    <property type="match status" value="1"/>
</dbReference>
<dbReference type="InterPro" id="IPR041095">
    <property type="entry name" value="EFG_II"/>
</dbReference>
<dbReference type="InterPro" id="IPR035647">
    <property type="entry name" value="EFG_III/V"/>
</dbReference>
<dbReference type="InterPro" id="IPR000640">
    <property type="entry name" value="EFG_V-like"/>
</dbReference>
<dbReference type="InterPro" id="IPR004161">
    <property type="entry name" value="EFTu-like_2"/>
</dbReference>
<dbReference type="InterPro" id="IPR031157">
    <property type="entry name" value="G_TR_CS"/>
</dbReference>
<dbReference type="InterPro" id="IPR027417">
    <property type="entry name" value="P-loop_NTPase"/>
</dbReference>
<dbReference type="InterPro" id="IPR020568">
    <property type="entry name" value="Ribosomal_Su5_D2-typ_SF"/>
</dbReference>
<dbReference type="InterPro" id="IPR014721">
    <property type="entry name" value="Ribsml_uS5_D2-typ_fold_subgr"/>
</dbReference>
<dbReference type="InterPro" id="IPR005225">
    <property type="entry name" value="Small_GTP-bd"/>
</dbReference>
<dbReference type="InterPro" id="IPR000795">
    <property type="entry name" value="T_Tr_GTP-bd_dom"/>
</dbReference>
<dbReference type="InterPro" id="IPR009000">
    <property type="entry name" value="Transl_B-barrel_sf"/>
</dbReference>
<dbReference type="InterPro" id="IPR004543">
    <property type="entry name" value="Transl_elong_EFG/EF2_arc"/>
</dbReference>
<dbReference type="InterPro" id="IPR005517">
    <property type="entry name" value="Transl_elong_EFG/EF2_IV"/>
</dbReference>
<dbReference type="NCBIfam" id="TIGR00490">
    <property type="entry name" value="aEF-2"/>
    <property type="match status" value="1"/>
</dbReference>
<dbReference type="NCBIfam" id="TIGR00231">
    <property type="entry name" value="small_GTP"/>
    <property type="match status" value="1"/>
</dbReference>
<dbReference type="PANTHER" id="PTHR42908:SF3">
    <property type="entry name" value="ELONGATION FACTOR-LIKE GTPASE 1"/>
    <property type="match status" value="1"/>
</dbReference>
<dbReference type="PANTHER" id="PTHR42908">
    <property type="entry name" value="TRANSLATION ELONGATION FACTOR-RELATED"/>
    <property type="match status" value="1"/>
</dbReference>
<dbReference type="Pfam" id="PF00679">
    <property type="entry name" value="EFG_C"/>
    <property type="match status" value="1"/>
</dbReference>
<dbReference type="Pfam" id="PF14492">
    <property type="entry name" value="EFG_III"/>
    <property type="match status" value="1"/>
</dbReference>
<dbReference type="Pfam" id="PF03764">
    <property type="entry name" value="EFG_IV"/>
    <property type="match status" value="1"/>
</dbReference>
<dbReference type="Pfam" id="PF00009">
    <property type="entry name" value="GTP_EFTU"/>
    <property type="match status" value="1"/>
</dbReference>
<dbReference type="Pfam" id="PF03144">
    <property type="entry name" value="GTP_EFTU_D2"/>
    <property type="match status" value="1"/>
</dbReference>
<dbReference type="PRINTS" id="PR00315">
    <property type="entry name" value="ELONGATNFCT"/>
</dbReference>
<dbReference type="SMART" id="SM00838">
    <property type="entry name" value="EFG_C"/>
    <property type="match status" value="1"/>
</dbReference>
<dbReference type="SMART" id="SM00889">
    <property type="entry name" value="EFG_IV"/>
    <property type="match status" value="1"/>
</dbReference>
<dbReference type="SUPFAM" id="SSF54980">
    <property type="entry name" value="EF-G C-terminal domain-like"/>
    <property type="match status" value="2"/>
</dbReference>
<dbReference type="SUPFAM" id="SSF52540">
    <property type="entry name" value="P-loop containing nucleoside triphosphate hydrolases"/>
    <property type="match status" value="1"/>
</dbReference>
<dbReference type="SUPFAM" id="SSF54211">
    <property type="entry name" value="Ribosomal protein S5 domain 2-like"/>
    <property type="match status" value="1"/>
</dbReference>
<dbReference type="SUPFAM" id="SSF50447">
    <property type="entry name" value="Translation proteins"/>
    <property type="match status" value="1"/>
</dbReference>
<dbReference type="PROSITE" id="PS00301">
    <property type="entry name" value="G_TR_1"/>
    <property type="match status" value="1"/>
</dbReference>
<dbReference type="PROSITE" id="PS51722">
    <property type="entry name" value="G_TR_2"/>
    <property type="match status" value="1"/>
</dbReference>
<gene>
    <name evidence="1" type="primary">fusA</name>
    <name type="ordered locus">YG5714_1408</name>
</gene>
<organism>
    <name type="scientific">Saccharolobus islandicus (strain Y.G.57.14 / Yellowstone #1)</name>
    <name type="common">Sulfolobus islandicus</name>
    <dbReference type="NCBI Taxonomy" id="439386"/>
    <lineage>
        <taxon>Archaea</taxon>
        <taxon>Thermoproteota</taxon>
        <taxon>Thermoprotei</taxon>
        <taxon>Sulfolobales</taxon>
        <taxon>Sulfolobaceae</taxon>
        <taxon>Saccharolobus</taxon>
    </lineage>
</organism>
<name>EF2_SACI7</name>
<proteinExistence type="inferred from homology"/>
<accession>C3NED6</accession>
<protein>
    <recommendedName>
        <fullName evidence="1">Elongation factor 2</fullName>
        <shortName evidence="1">EF-2</shortName>
    </recommendedName>
</protein>
<keyword id="KW-0963">Cytoplasm</keyword>
<keyword id="KW-0251">Elongation factor</keyword>
<keyword id="KW-0342">GTP-binding</keyword>
<keyword id="KW-0547">Nucleotide-binding</keyword>
<keyword id="KW-0648">Protein biosynthesis</keyword>
<feature type="chain" id="PRO_1000202318" description="Elongation factor 2">
    <location>
        <begin position="1"/>
        <end position="736"/>
    </location>
</feature>
<feature type="domain" description="tr-type G">
    <location>
        <begin position="18"/>
        <end position="234"/>
    </location>
</feature>
<feature type="binding site" evidence="1">
    <location>
        <begin position="27"/>
        <end position="34"/>
    </location>
    <ligand>
        <name>GTP</name>
        <dbReference type="ChEBI" id="CHEBI:37565"/>
    </ligand>
</feature>
<feature type="binding site" evidence="1">
    <location>
        <begin position="93"/>
        <end position="97"/>
    </location>
    <ligand>
        <name>GTP</name>
        <dbReference type="ChEBI" id="CHEBI:37565"/>
    </ligand>
</feature>
<feature type="binding site" evidence="1">
    <location>
        <begin position="147"/>
        <end position="150"/>
    </location>
    <ligand>
        <name>GTP</name>
        <dbReference type="ChEBI" id="CHEBI:37565"/>
    </ligand>
</feature>
<feature type="modified residue" description="Diphthamide" evidence="1">
    <location>
        <position position="603"/>
    </location>
</feature>
<reference key="1">
    <citation type="journal article" date="2009" name="Proc. Natl. Acad. Sci. U.S.A.">
        <title>Biogeography of the Sulfolobus islandicus pan-genome.</title>
        <authorList>
            <person name="Reno M.L."/>
            <person name="Held N.L."/>
            <person name="Fields C.J."/>
            <person name="Burke P.V."/>
            <person name="Whitaker R.J."/>
        </authorList>
    </citation>
    <scope>NUCLEOTIDE SEQUENCE [LARGE SCALE GENOMIC DNA]</scope>
    <source>
        <strain>Y.G.57.14 / Yellowstone #1</strain>
    </source>
</reference>
<comment type="function">
    <text evidence="1">Catalyzes the GTP-dependent ribosomal translocation step during translation elongation. During this step, the ribosome changes from the pre-translocational (PRE) to the post-translocational (POST) state as the newly formed A-site-bound peptidyl-tRNA and P-site-bound deacylated tRNA move to the P and E sites, respectively. Catalyzes the coordinated movement of the two tRNA molecules, the mRNA and conformational changes in the ribosome.</text>
</comment>
<comment type="subcellular location">
    <subcellularLocation>
        <location evidence="1">Cytoplasm</location>
    </subcellularLocation>
</comment>
<comment type="similarity">
    <text evidence="1">Belongs to the TRAFAC class translation factor GTPase superfamily. Classic translation factor GTPase family. EF-G/EF-2 subfamily.</text>
</comment>